<comment type="function">
    <text>The branched-chain alpha-keto dehydrogenase complex catalyzes the overall conversion of alpha-keto acids to acyl-CoA and CO(2). It contains multiple copies of three enzymatic components: branched-chain alpha-keto acid decarboxylase (E1), lipoamide acyltransferase (E2) and lipoamide dehydrogenase (E3).</text>
</comment>
<comment type="catalytic activity">
    <reaction>
        <text>N(6)-[(R)-lipoyl]-L-lysyl-[protein] + 3-methyl-2-oxobutanoate + H(+) = N(6)-[(R)-S(8)-2-methylpropanoyldihydrolipoyl]-L-lysyl-[protein] + CO2</text>
        <dbReference type="Rhea" id="RHEA:13457"/>
        <dbReference type="Rhea" id="RHEA-COMP:10474"/>
        <dbReference type="Rhea" id="RHEA-COMP:10497"/>
        <dbReference type="ChEBI" id="CHEBI:11851"/>
        <dbReference type="ChEBI" id="CHEBI:15378"/>
        <dbReference type="ChEBI" id="CHEBI:16526"/>
        <dbReference type="ChEBI" id="CHEBI:83099"/>
        <dbReference type="ChEBI" id="CHEBI:83142"/>
        <dbReference type="EC" id="1.2.4.4"/>
    </reaction>
</comment>
<comment type="cofactor">
    <cofactor>
        <name>thiamine diphosphate</name>
        <dbReference type="ChEBI" id="CHEBI:58937"/>
    </cofactor>
</comment>
<comment type="subunit">
    <text>Heterotetramer of two alpha and two beta chains. Directly associated with ODBA in the E1 complex.</text>
</comment>
<organism>
    <name type="scientific">Bacillus subtilis (strain 168)</name>
    <dbReference type="NCBI Taxonomy" id="224308"/>
    <lineage>
        <taxon>Bacteria</taxon>
        <taxon>Bacillati</taxon>
        <taxon>Bacillota</taxon>
        <taxon>Bacilli</taxon>
        <taxon>Bacillales</taxon>
        <taxon>Bacillaceae</taxon>
        <taxon>Bacillus</taxon>
    </lineage>
</organism>
<keyword id="KW-0903">Direct protein sequencing</keyword>
<keyword id="KW-0560">Oxidoreductase</keyword>
<keyword id="KW-1185">Reference proteome</keyword>
<keyword id="KW-0786">Thiamine pyrophosphate</keyword>
<gene>
    <name type="primary">bfmBAB</name>
    <name type="synonym">bfmB1b</name>
    <name type="ordered locus">BSU24040</name>
</gene>
<feature type="chain" id="PRO_0000162250" description="2-oxoisovalerate dehydrogenase subunit beta">
    <location>
        <begin position="1"/>
        <end position="327"/>
    </location>
</feature>
<feature type="active site" description="Proton acceptor" evidence="1">
    <location>
        <position position="129"/>
    </location>
</feature>
<feature type="binding site" evidence="1">
    <location>
        <position position="29"/>
    </location>
    <ligand>
        <name>thiamine diphosphate</name>
        <dbReference type="ChEBI" id="CHEBI:58937"/>
    </ligand>
</feature>
<feature type="binding site" evidence="1">
    <location>
        <begin position="58"/>
        <end position="60"/>
    </location>
    <ligand>
        <name>thiamine diphosphate</name>
        <dbReference type="ChEBI" id="CHEBI:58937"/>
    </ligand>
</feature>
<feature type="binding site" evidence="1">
    <location>
        <position position="82"/>
    </location>
    <ligand>
        <name>thiamine diphosphate</name>
        <dbReference type="ChEBI" id="CHEBI:58937"/>
    </ligand>
</feature>
<feature type="binding site" evidence="1">
    <location>
        <begin position="83"/>
        <end position="86"/>
    </location>
    <ligand>
        <name>substrate</name>
    </ligand>
</feature>
<feature type="binding site" evidence="1">
    <location>
        <begin position="86"/>
        <end position="89"/>
    </location>
    <ligand>
        <name>thiamine diphosphate</name>
        <dbReference type="ChEBI" id="CHEBI:58937"/>
    </ligand>
</feature>
<feature type="binding site" evidence="1">
    <location>
        <position position="129"/>
    </location>
    <ligand>
        <name>substrate</name>
    </ligand>
</feature>
<dbReference type="EC" id="1.2.4.4"/>
<dbReference type="EMBL" id="M97391">
    <property type="protein sequence ID" value="AAA22279.1"/>
    <property type="molecule type" value="Genomic_DNA"/>
</dbReference>
<dbReference type="EMBL" id="D84432">
    <property type="protein sequence ID" value="BAA12599.1"/>
    <property type="molecule type" value="Genomic_DNA"/>
</dbReference>
<dbReference type="EMBL" id="AL009126">
    <property type="protein sequence ID" value="CAB14335.1"/>
    <property type="molecule type" value="Genomic_DNA"/>
</dbReference>
<dbReference type="PIR" id="D69593">
    <property type="entry name" value="D69593"/>
</dbReference>
<dbReference type="RefSeq" id="WP_004398638.1">
    <property type="nucleotide sequence ID" value="NZ_OZ025638.1"/>
</dbReference>
<dbReference type="SMR" id="P37941"/>
<dbReference type="FunCoup" id="P37941">
    <property type="interactions" value="532"/>
</dbReference>
<dbReference type="IntAct" id="P37941">
    <property type="interactions" value="2"/>
</dbReference>
<dbReference type="STRING" id="224308.BSU24040"/>
<dbReference type="jPOST" id="P37941"/>
<dbReference type="PaxDb" id="224308-BSU24040"/>
<dbReference type="EnsemblBacteria" id="CAB14335">
    <property type="protein sequence ID" value="CAB14335"/>
    <property type="gene ID" value="BSU_24040"/>
</dbReference>
<dbReference type="GeneID" id="938672"/>
<dbReference type="KEGG" id="bsu:BSU24040"/>
<dbReference type="PATRIC" id="fig|224308.179.peg.2618"/>
<dbReference type="eggNOG" id="COG0022">
    <property type="taxonomic scope" value="Bacteria"/>
</dbReference>
<dbReference type="InParanoid" id="P37941"/>
<dbReference type="OrthoDB" id="9771835at2"/>
<dbReference type="PhylomeDB" id="P37941"/>
<dbReference type="BioCyc" id="BSUB:BSU24040-MONOMER"/>
<dbReference type="BioCyc" id="MetaCyc:MONOMER-11684"/>
<dbReference type="Proteomes" id="UP000001570">
    <property type="component" value="Chromosome"/>
</dbReference>
<dbReference type="GO" id="GO:0003863">
    <property type="term" value="F:3-methyl-2-oxobutanoate dehydrogenase (2-methylpropanoyl-transferring) activity"/>
    <property type="evidence" value="ECO:0007669"/>
    <property type="project" value="UniProtKB-EC"/>
</dbReference>
<dbReference type="GO" id="GO:0009083">
    <property type="term" value="P:branched-chain amino acid catabolic process"/>
    <property type="evidence" value="ECO:0000318"/>
    <property type="project" value="GO_Central"/>
</dbReference>
<dbReference type="GO" id="GO:0007584">
    <property type="term" value="P:response to nutrient"/>
    <property type="evidence" value="ECO:0000318"/>
    <property type="project" value="GO_Central"/>
</dbReference>
<dbReference type="CDD" id="cd07036">
    <property type="entry name" value="TPP_PYR_E1-PDHc-beta_like"/>
    <property type="match status" value="1"/>
</dbReference>
<dbReference type="FunFam" id="3.40.50.920:FF:000001">
    <property type="entry name" value="Pyruvate dehydrogenase E1 beta subunit"/>
    <property type="match status" value="1"/>
</dbReference>
<dbReference type="FunFam" id="3.40.50.970:FF:000001">
    <property type="entry name" value="Pyruvate dehydrogenase E1 beta subunit"/>
    <property type="match status" value="1"/>
</dbReference>
<dbReference type="Gene3D" id="3.40.50.920">
    <property type="match status" value="1"/>
</dbReference>
<dbReference type="Gene3D" id="3.40.50.970">
    <property type="match status" value="1"/>
</dbReference>
<dbReference type="InterPro" id="IPR029061">
    <property type="entry name" value="THDP-binding"/>
</dbReference>
<dbReference type="InterPro" id="IPR009014">
    <property type="entry name" value="Transketo_C/PFOR_II"/>
</dbReference>
<dbReference type="InterPro" id="IPR005475">
    <property type="entry name" value="Transketolase-like_Pyr-bd"/>
</dbReference>
<dbReference type="InterPro" id="IPR033248">
    <property type="entry name" value="Transketolase_C"/>
</dbReference>
<dbReference type="NCBIfam" id="NF006667">
    <property type="entry name" value="PRK09212.1"/>
    <property type="match status" value="1"/>
</dbReference>
<dbReference type="PANTHER" id="PTHR43257">
    <property type="entry name" value="PYRUVATE DEHYDROGENASE E1 COMPONENT BETA SUBUNIT"/>
    <property type="match status" value="1"/>
</dbReference>
<dbReference type="PANTHER" id="PTHR43257:SF2">
    <property type="entry name" value="PYRUVATE DEHYDROGENASE E1 COMPONENT SUBUNIT BETA"/>
    <property type="match status" value="1"/>
</dbReference>
<dbReference type="Pfam" id="PF02779">
    <property type="entry name" value="Transket_pyr"/>
    <property type="match status" value="1"/>
</dbReference>
<dbReference type="Pfam" id="PF02780">
    <property type="entry name" value="Transketolase_C"/>
    <property type="match status" value="1"/>
</dbReference>
<dbReference type="SMART" id="SM00861">
    <property type="entry name" value="Transket_pyr"/>
    <property type="match status" value="1"/>
</dbReference>
<dbReference type="SUPFAM" id="SSF52518">
    <property type="entry name" value="Thiamin diphosphate-binding fold (THDP-binding)"/>
    <property type="match status" value="1"/>
</dbReference>
<dbReference type="SUPFAM" id="SSF52922">
    <property type="entry name" value="TK C-terminal domain-like"/>
    <property type="match status" value="1"/>
</dbReference>
<accession>P37941</accession>
<sequence>MSVMSYIDAINLAMKEEMERDSRVFVLGEDVGRKGGVFKATAGLYEQFGEERVMDTPLAESAIAGVGIGAAMYGMRPIAEMQFADFIMPAVNQIISEAAKIRYRSNNDWSCPIVVRAPYGGGVHGALYHSQSVEAIFANQPGLKIVMPSTPYDAKGLLKAAVRDEDPVLFFEHKRAYRLIKGEVPADDYVLPIGKADVKREGDDITVITYGLCVHFALQAAERLEKDGISAHVVDLRTVYPLDKEAIIEAASKTGKVLLVTEDTKEGSIMSEVAAIISEHCLFDLDAPIKRLAGPDIPAMPYAPTMEKYFMVNPDKVEAAMRELAEF</sequence>
<name>ODBB_BACSU</name>
<evidence type="ECO:0000250" key="1"/>
<reference key="1">
    <citation type="journal article" date="1993" name="Eur. J. Biochem.">
        <title>The primary structure of branched-chain alpha-oxo acid dehydrogenase from Bacillus subtilis and its similarity to other alpha-oxo acid dehydrogenases.</title>
        <authorList>
            <person name="Wang G.-F."/>
            <person name="Kuriki T."/>
            <person name="Roy K.L."/>
            <person name="Kaneda T."/>
        </authorList>
    </citation>
    <scope>NUCLEOTIDE SEQUENCE [GENOMIC DNA]</scope>
    <scope>PROTEIN SEQUENCE OF 1-32</scope>
    <source>
        <strain>168</strain>
    </source>
</reference>
<reference key="2">
    <citation type="journal article" date="1996" name="Microbiology">
        <title>Systematic sequencing of the 283 kb 210 degrees-232 degrees region of the Bacillus subtilis genome containing the skin element and many sporulation genes.</title>
        <authorList>
            <person name="Mizuno M."/>
            <person name="Masuda S."/>
            <person name="Takemaru K."/>
            <person name="Hosono S."/>
            <person name="Sato T."/>
            <person name="Takeuchi M."/>
            <person name="Kobayashi Y."/>
        </authorList>
    </citation>
    <scope>NUCLEOTIDE SEQUENCE [GENOMIC DNA]</scope>
    <source>
        <strain>168 / JH642</strain>
    </source>
</reference>
<reference key="3">
    <citation type="journal article" date="1997" name="Nature">
        <title>The complete genome sequence of the Gram-positive bacterium Bacillus subtilis.</title>
        <authorList>
            <person name="Kunst F."/>
            <person name="Ogasawara N."/>
            <person name="Moszer I."/>
            <person name="Albertini A.M."/>
            <person name="Alloni G."/>
            <person name="Azevedo V."/>
            <person name="Bertero M.G."/>
            <person name="Bessieres P."/>
            <person name="Bolotin A."/>
            <person name="Borchert S."/>
            <person name="Borriss R."/>
            <person name="Boursier L."/>
            <person name="Brans A."/>
            <person name="Braun M."/>
            <person name="Brignell S.C."/>
            <person name="Bron S."/>
            <person name="Brouillet S."/>
            <person name="Bruschi C.V."/>
            <person name="Caldwell B."/>
            <person name="Capuano V."/>
            <person name="Carter N.M."/>
            <person name="Choi S.-K."/>
            <person name="Codani J.-J."/>
            <person name="Connerton I.F."/>
            <person name="Cummings N.J."/>
            <person name="Daniel R.A."/>
            <person name="Denizot F."/>
            <person name="Devine K.M."/>
            <person name="Duesterhoeft A."/>
            <person name="Ehrlich S.D."/>
            <person name="Emmerson P.T."/>
            <person name="Entian K.-D."/>
            <person name="Errington J."/>
            <person name="Fabret C."/>
            <person name="Ferrari E."/>
            <person name="Foulger D."/>
            <person name="Fritz C."/>
            <person name="Fujita M."/>
            <person name="Fujita Y."/>
            <person name="Fuma S."/>
            <person name="Galizzi A."/>
            <person name="Galleron N."/>
            <person name="Ghim S.-Y."/>
            <person name="Glaser P."/>
            <person name="Goffeau A."/>
            <person name="Golightly E.J."/>
            <person name="Grandi G."/>
            <person name="Guiseppi G."/>
            <person name="Guy B.J."/>
            <person name="Haga K."/>
            <person name="Haiech J."/>
            <person name="Harwood C.R."/>
            <person name="Henaut A."/>
            <person name="Hilbert H."/>
            <person name="Holsappel S."/>
            <person name="Hosono S."/>
            <person name="Hullo M.-F."/>
            <person name="Itaya M."/>
            <person name="Jones L.-M."/>
            <person name="Joris B."/>
            <person name="Karamata D."/>
            <person name="Kasahara Y."/>
            <person name="Klaerr-Blanchard M."/>
            <person name="Klein C."/>
            <person name="Kobayashi Y."/>
            <person name="Koetter P."/>
            <person name="Koningstein G."/>
            <person name="Krogh S."/>
            <person name="Kumano M."/>
            <person name="Kurita K."/>
            <person name="Lapidus A."/>
            <person name="Lardinois S."/>
            <person name="Lauber J."/>
            <person name="Lazarevic V."/>
            <person name="Lee S.-M."/>
            <person name="Levine A."/>
            <person name="Liu H."/>
            <person name="Masuda S."/>
            <person name="Mauel C."/>
            <person name="Medigue C."/>
            <person name="Medina N."/>
            <person name="Mellado R.P."/>
            <person name="Mizuno M."/>
            <person name="Moestl D."/>
            <person name="Nakai S."/>
            <person name="Noback M."/>
            <person name="Noone D."/>
            <person name="O'Reilly M."/>
            <person name="Ogawa K."/>
            <person name="Ogiwara A."/>
            <person name="Oudega B."/>
            <person name="Park S.-H."/>
            <person name="Parro V."/>
            <person name="Pohl T.M."/>
            <person name="Portetelle D."/>
            <person name="Porwollik S."/>
            <person name="Prescott A.M."/>
            <person name="Presecan E."/>
            <person name="Pujic P."/>
            <person name="Purnelle B."/>
            <person name="Rapoport G."/>
            <person name="Rey M."/>
            <person name="Reynolds S."/>
            <person name="Rieger M."/>
            <person name="Rivolta C."/>
            <person name="Rocha E."/>
            <person name="Roche B."/>
            <person name="Rose M."/>
            <person name="Sadaie Y."/>
            <person name="Sato T."/>
            <person name="Scanlan E."/>
            <person name="Schleich S."/>
            <person name="Schroeter R."/>
            <person name="Scoffone F."/>
            <person name="Sekiguchi J."/>
            <person name="Sekowska A."/>
            <person name="Seror S.J."/>
            <person name="Serror P."/>
            <person name="Shin B.-S."/>
            <person name="Soldo B."/>
            <person name="Sorokin A."/>
            <person name="Tacconi E."/>
            <person name="Takagi T."/>
            <person name="Takahashi H."/>
            <person name="Takemaru K."/>
            <person name="Takeuchi M."/>
            <person name="Tamakoshi A."/>
            <person name="Tanaka T."/>
            <person name="Terpstra P."/>
            <person name="Tognoni A."/>
            <person name="Tosato V."/>
            <person name="Uchiyama S."/>
            <person name="Vandenbol M."/>
            <person name="Vannier F."/>
            <person name="Vassarotti A."/>
            <person name="Viari A."/>
            <person name="Wambutt R."/>
            <person name="Wedler E."/>
            <person name="Wedler H."/>
            <person name="Weitzenegger T."/>
            <person name="Winters P."/>
            <person name="Wipat A."/>
            <person name="Yamamoto H."/>
            <person name="Yamane K."/>
            <person name="Yasumoto K."/>
            <person name="Yata K."/>
            <person name="Yoshida K."/>
            <person name="Yoshikawa H.-F."/>
            <person name="Zumstein E."/>
            <person name="Yoshikawa H."/>
            <person name="Danchin A."/>
        </authorList>
    </citation>
    <scope>NUCLEOTIDE SEQUENCE [LARGE SCALE GENOMIC DNA]</scope>
    <source>
        <strain>168</strain>
    </source>
</reference>
<proteinExistence type="evidence at protein level"/>
<protein>
    <recommendedName>
        <fullName>2-oxoisovalerate dehydrogenase subunit beta</fullName>
        <ecNumber>1.2.4.4</ecNumber>
    </recommendedName>
    <alternativeName>
        <fullName>Branched-chain alpha-keto acid dehydrogenase E1 component beta chain</fullName>
        <shortName>BCKDH E1-beta</shortName>
    </alternativeName>
</protein>